<proteinExistence type="evidence at transcript level"/>
<reference key="1">
    <citation type="journal article" date="1984" name="Nucleic Acids Res.">
        <title>Sequence homology between human and animal rotavirus serotype-specific glycoproteins.</title>
        <authorList>
            <person name="Dyall-Smith M.L."/>
            <person name="Holmes I.H."/>
        </authorList>
    </citation>
    <scope>NUCLEOTIDE SEQUENCE [MRNA]</scope>
</reference>
<reference key="2">
    <citation type="journal article" date="1987" name="Virology">
        <title>Comparison of the amino acid sequences of the major neutralization protein of four human rotavirus serotypes.</title>
        <authorList>
            <person name="Green K.Y."/>
            <person name="Midthun K."/>
            <person name="Gorziglia M."/>
            <person name="Hoshino Y."/>
            <person name="Kapikian A.Z."/>
            <person name="Chanock R.M."/>
            <person name="Flores J."/>
        </authorList>
    </citation>
    <scope>NUCLEOTIDE SEQUENCE [MRNA]</scope>
</reference>
<reference key="3">
    <citation type="journal article" date="2004" name="Trends Microbiol.">
        <title>Multistep entry of rotavirus into cells: a Versaillesque dance.</title>
        <authorList>
            <person name="Lopez S."/>
            <person name="Arias C.F."/>
        </authorList>
    </citation>
    <scope>REVIEW</scope>
</reference>
<keyword id="KW-0024">Alternative initiation</keyword>
<keyword id="KW-0106">Calcium</keyword>
<keyword id="KW-0167">Capsid protein</keyword>
<keyword id="KW-1015">Disulfide bond</keyword>
<keyword id="KW-0325">Glycoprotein</keyword>
<keyword id="KW-1038">Host endoplasmic reticulum</keyword>
<keyword id="KW-0945">Host-virus interaction</keyword>
<keyword id="KW-0479">Metal-binding</keyword>
<keyword id="KW-1152">Outer capsid protein</keyword>
<keyword id="KW-0732">Signal</keyword>
<keyword id="KW-1146">T=13 icosahedral capsid protein</keyword>
<keyword id="KW-0946">Virion</keyword>
<protein>
    <recommendedName>
        <fullName evidence="4">Outer capsid glycoprotein VP7</fullName>
    </recommendedName>
</protein>
<name>VP7_ROTHA</name>
<organismHost>
    <name type="scientific">Homo sapiens</name>
    <name type="common">Human</name>
    <dbReference type="NCBI Taxonomy" id="9606"/>
</organismHost>
<feature type="signal peptide" evidence="4">
    <location>
        <begin position="1"/>
        <end position="50"/>
    </location>
</feature>
<feature type="chain" id="PRO_0000149595" description="Outer capsid glycoprotein VP7" evidence="4">
    <location>
        <begin position="51"/>
        <end position="326"/>
    </location>
</feature>
<feature type="region of interest" description="CNP motif; interaction with ITGAV/ITGB3" evidence="4">
    <location>
        <begin position="165"/>
        <end position="167"/>
    </location>
</feature>
<feature type="region of interest" description="GPR motif; interaction with ITGAX/ITGB2" evidence="4">
    <location>
        <begin position="253"/>
        <end position="255"/>
    </location>
</feature>
<feature type="binding site" evidence="4">
    <location>
        <position position="95"/>
    </location>
    <ligand>
        <name>Ca(2+)</name>
        <dbReference type="ChEBI" id="CHEBI:29108"/>
        <label>1</label>
    </ligand>
</feature>
<feature type="binding site" evidence="4">
    <location>
        <position position="177"/>
    </location>
    <ligand>
        <name>Ca(2+)</name>
        <dbReference type="ChEBI" id="CHEBI:29108"/>
        <label>2</label>
    </ligand>
</feature>
<feature type="binding site" evidence="4">
    <location>
        <position position="206"/>
    </location>
    <ligand>
        <name>Ca(2+)</name>
        <dbReference type="ChEBI" id="CHEBI:29108"/>
        <label>1</label>
    </ligand>
</feature>
<feature type="binding site" evidence="4">
    <location>
        <position position="214"/>
    </location>
    <ligand>
        <name>Ca(2+)</name>
        <dbReference type="ChEBI" id="CHEBI:29108"/>
        <label>1</label>
    </ligand>
</feature>
<feature type="binding site" evidence="4">
    <location>
        <position position="216"/>
    </location>
    <ligand>
        <name>Ca(2+)</name>
        <dbReference type="ChEBI" id="CHEBI:29108"/>
        <label>1</label>
    </ligand>
</feature>
<feature type="binding site" evidence="4">
    <location>
        <position position="228"/>
    </location>
    <ligand>
        <name>Ca(2+)</name>
        <dbReference type="ChEBI" id="CHEBI:29108"/>
        <label>2</label>
    </ligand>
</feature>
<feature type="binding site" evidence="4">
    <location>
        <position position="229"/>
    </location>
    <ligand>
        <name>Ca(2+)</name>
        <dbReference type="ChEBI" id="CHEBI:29108"/>
        <label>2</label>
    </ligand>
</feature>
<feature type="binding site" evidence="4">
    <location>
        <position position="301"/>
    </location>
    <ligand>
        <name>Ca(2+)</name>
        <dbReference type="ChEBI" id="CHEBI:29108"/>
        <label>2</label>
    </ligand>
</feature>
<feature type="glycosylation site" description="N-linked (GlcNAc...) asparagine; by host" evidence="3">
    <location>
        <position position="69"/>
    </location>
</feature>
<feature type="glycosylation site" description="N-linked (GlcNAc...) asparagine; by host" evidence="3">
    <location>
        <position position="146"/>
    </location>
</feature>
<feature type="glycosylation site" description="N-linked (GlcNAc...) asparagine; by host" evidence="3">
    <location>
        <position position="238"/>
    </location>
</feature>
<feature type="disulfide bond" evidence="4">
    <location>
        <begin position="82"/>
        <end position="135"/>
    </location>
</feature>
<feature type="disulfide bond" evidence="4">
    <location>
        <begin position="165"/>
        <end position="249"/>
    </location>
</feature>
<feature type="disulfide bond" evidence="4">
    <location>
        <begin position="191"/>
        <end position="244"/>
    </location>
</feature>
<feature type="disulfide bond" evidence="4">
    <location>
        <begin position="196"/>
        <end position="207"/>
    </location>
</feature>
<feature type="splice variant" id="VSP_038594" description="In isoform 2." evidence="6">
    <location>
        <begin position="1"/>
        <end position="29"/>
    </location>
</feature>
<sequence length="326" mass="37203">MYGIEYTTILTILISIILLNYILKTITNTMDYIIFRFLLLIALISPFVRTQNYGMYLPITGSLDAVYTNSTSGEPFLTSTLCLYYPAEAKNEISDDEWENTLSQLFLTKGWPIGSVYFKDYNDINTFSVNPQLYCDYNVVLMRYDNTSELDASELADLILNEWLCNPMDISLYYYQQSSESNKWISMGTDCTVKVCPLNTQTLGIGCKTTDVNTFEIVASSEKLVITDVVNGVNHNINISINTCTIRNCNKLGPRENVAIIQVGGPNALDITADPTTVPQVQRIMRINWKKWWQVFYTVVDYINQVIQVMSKRSRSLDAAAFYYRI</sequence>
<organism>
    <name type="scientific">Rotavirus A (isolate RVA/Human/Australia/Hu5/1977/G2P[X])</name>
    <name type="common">RV-A</name>
    <name type="synonym">Rotavirus A (isolate Hu/5)</name>
    <dbReference type="NCBI Taxonomy" id="10948"/>
    <lineage>
        <taxon>Viruses</taxon>
        <taxon>Riboviria</taxon>
        <taxon>Orthornavirae</taxon>
        <taxon>Duplornaviricota</taxon>
        <taxon>Resentoviricetes</taxon>
        <taxon>Reovirales</taxon>
        <taxon>Sedoreoviridae</taxon>
        <taxon>Rotavirus</taxon>
        <taxon>Rotavirus A</taxon>
    </lineage>
</organism>
<evidence type="ECO:0000250" key="1"/>
<evidence type="ECO:0000250" key="2">
    <source>
        <dbReference type="UniProtKB" id="P03533"/>
    </source>
</evidence>
<evidence type="ECO:0000255" key="3"/>
<evidence type="ECO:0000255" key="4">
    <source>
        <dbReference type="HAMAP-Rule" id="MF_04131"/>
    </source>
</evidence>
<evidence type="ECO:0000303" key="5">
    <source>
    </source>
</evidence>
<evidence type="ECO:0000305" key="6"/>
<dbReference type="EMBL" id="X00572">
    <property type="protein sequence ID" value="CAA25236.1"/>
    <property type="molecule type" value="mRNA"/>
</dbReference>
<dbReference type="EMBL" id="A01028">
    <property type="protein sequence ID" value="CAA00124.1"/>
    <property type="molecule type" value="Unassigned_RNA"/>
</dbReference>
<dbReference type="PIR" id="G27620">
    <property type="entry name" value="VGXRHU"/>
</dbReference>
<dbReference type="SMR" id="P04328"/>
<dbReference type="GO" id="GO:0044166">
    <property type="term" value="C:host cell endoplasmic reticulum lumen"/>
    <property type="evidence" value="ECO:0007669"/>
    <property type="project" value="UniProtKB-SubCell"/>
</dbReference>
<dbReference type="GO" id="GO:0039621">
    <property type="term" value="C:T=13 icosahedral viral capsid"/>
    <property type="evidence" value="ECO:0007669"/>
    <property type="project" value="UniProtKB-UniRule"/>
</dbReference>
<dbReference type="GO" id="GO:0039624">
    <property type="term" value="C:viral outer capsid"/>
    <property type="evidence" value="ECO:0007669"/>
    <property type="project" value="UniProtKB-UniRule"/>
</dbReference>
<dbReference type="GO" id="GO:0046872">
    <property type="term" value="F:metal ion binding"/>
    <property type="evidence" value="ECO:0007669"/>
    <property type="project" value="UniProtKB-KW"/>
</dbReference>
<dbReference type="Gene3D" id="3.40.50.11130">
    <property type="entry name" value="Glycoprotein VP7, domain 1"/>
    <property type="match status" value="1"/>
</dbReference>
<dbReference type="Gene3D" id="2.60.120.800">
    <property type="entry name" value="Rotavirus outer-layer protein VP7, domain 2"/>
    <property type="match status" value="1"/>
</dbReference>
<dbReference type="HAMAP" id="MF_04130">
    <property type="entry name" value="Rota_VP7"/>
    <property type="match status" value="1"/>
</dbReference>
<dbReference type="HAMAP" id="MF_04131">
    <property type="entry name" value="Rota_VP7_A"/>
    <property type="match status" value="1"/>
</dbReference>
<dbReference type="InterPro" id="IPR001963">
    <property type="entry name" value="VP7"/>
</dbReference>
<dbReference type="InterPro" id="IPR042207">
    <property type="entry name" value="VP7_1"/>
</dbReference>
<dbReference type="InterPro" id="IPR042210">
    <property type="entry name" value="VP7_2"/>
</dbReference>
<dbReference type="Pfam" id="PF00434">
    <property type="entry name" value="VP7"/>
    <property type="match status" value="1"/>
</dbReference>
<comment type="function">
    <text evidence="4">Calcium-binding protein that interacts with rotavirus cell receptors once the initial attachment by VP4 has been achieved. Rotavirus attachment and entry into the host cell probably involves multiple sequential contacts between the outer capsid proteins VP4 and VP7, and the cell receptors. Following entry into the host cell, low intracellular or intravesicular Ca(2+) concentration probably causes the calcium-stabilized VP7 trimers to dissociate from the virion. This step is probably necessary for the membrane-disrupting entry step and the release of VP4, which is locked onto the virion by VP7.</text>
</comment>
<comment type="subunit">
    <text evidence="4">Homotrimer; disulfide-linked. 2 Ca(2+) ions bound at each subunit interface in the trimer hold the trimer together. Interacts with the intermediate capsid protein VP6. Interacts with the outer capsid protein VP5*.</text>
</comment>
<comment type="subcellular location">
    <subcellularLocation>
        <location evidence="4">Virion</location>
    </subcellularLocation>
    <subcellularLocation>
        <location evidence="4">Host endoplasmic reticulum lumen</location>
    </subcellularLocation>
    <text evidence="4">The outer layer contains 780 copies of VP7, grouped as 260 trimers. Immature double-layered particles assembled in the cytoplasm bud across the membrane of the endoplasmic reticulum, acquiring during this process a transient lipid membrane that is modified with the ER resident viral glycoproteins NSP4 and VP7; these enveloped particles also contain VP4. As the particles move towards the interior of the ER. cisternae, the transient lipid membrane and the non-structural protein NSP4 are lost, while the virus surface proteins VP4 and VP7 rearrange to form the outermost virus protein layer, yielding mature infectious triple-layered particles.</text>
</comment>
<comment type="alternative products">
    <event type="alternative initiation"/>
    <isoform>
        <id>P04328-1</id>
        <name>1</name>
        <sequence type="displayed"/>
    </isoform>
    <isoform>
        <id>P04328-2</id>
        <name>2</name>
        <sequence type="described" ref="VSP_038594"/>
    </isoform>
</comment>
<comment type="PTM">
    <text evidence="1">Intramolecular disulfide bonds.</text>
</comment>
<comment type="PTM">
    <text evidence="4">N-glycosylated.</text>
</comment>
<comment type="PTM">
    <text evidence="4">The N-terminus is blocked possibly by pyroglutamic acid.</text>
</comment>
<comment type="miscellaneous">
    <text evidence="4 5">Some rotavirus strains are neuraminidase-sensitive and require sialic acid to attach to the cell surface. Some rotavirus strains are integrin-dependent. Some rotavirus strains depend on ganglioside for their entry into the host cell. Hsp70 also seems to be involved in the entry of some strains.</text>
</comment>
<comment type="miscellaneous">
    <text evidence="4">In group A rotaviruses, VP7 defines the G serotype.</text>
</comment>
<comment type="miscellaneous">
    <molecule>Isoform 2</molecule>
    <text evidence="2">Produced by alternative initiation at Met-30 of isoform 1.</text>
</comment>
<comment type="similarity">
    <text evidence="4">Belongs to the rotavirus VP7 family.</text>
</comment>
<accession>P04328</accession>